<name>TDA2_YEAS2</name>
<evidence type="ECO:0000250" key="1">
    <source>
        <dbReference type="UniProtKB" id="P40045"/>
    </source>
</evidence>
<evidence type="ECO:0000305" key="2"/>
<proteinExistence type="inferred from homology"/>
<reference key="1">
    <citation type="journal article" date="2009" name="Genome Res.">
        <title>Genome structure of a Saccharomyces cerevisiae strain widely used in bioethanol production.</title>
        <authorList>
            <person name="Argueso J.L."/>
            <person name="Carazzolle M.F."/>
            <person name="Mieczkowski P.A."/>
            <person name="Duarte F.M."/>
            <person name="Netto O.V.C."/>
            <person name="Missawa S.K."/>
            <person name="Galzerani F."/>
            <person name="Costa G.G.L."/>
            <person name="Vidal R.O."/>
            <person name="Noronha M.F."/>
            <person name="Dominska M."/>
            <person name="Andrietta M.G.S."/>
            <person name="Andrietta S.R."/>
            <person name="Cunha A.F."/>
            <person name="Gomes L.H."/>
            <person name="Tavares F.C.A."/>
            <person name="Alcarde A.R."/>
            <person name="Dietrich F.S."/>
            <person name="McCusker J.H."/>
            <person name="Petes T.D."/>
            <person name="Pereira G.A.G."/>
        </authorList>
    </citation>
    <scope>NUCLEOTIDE SEQUENCE [LARGE SCALE GENOMIC DNA]</scope>
    <source>
        <strain>JAY291</strain>
    </source>
</reference>
<organism>
    <name type="scientific">Saccharomyces cerevisiae (strain JAY291)</name>
    <name type="common">Baker's yeast</name>
    <dbReference type="NCBI Taxonomy" id="574961"/>
    <lineage>
        <taxon>Eukaryota</taxon>
        <taxon>Fungi</taxon>
        <taxon>Dikarya</taxon>
        <taxon>Ascomycota</taxon>
        <taxon>Saccharomycotina</taxon>
        <taxon>Saccharomycetes</taxon>
        <taxon>Saccharomycetales</taxon>
        <taxon>Saccharomycetaceae</taxon>
        <taxon>Saccharomyces</taxon>
    </lineage>
</organism>
<keyword id="KW-0007">Acetylation</keyword>
<keyword id="KW-0966">Cell projection</keyword>
<keyword id="KW-0963">Cytoplasm</keyword>
<gene>
    <name type="primary">TDA2</name>
    <name type="ORF">C1Q_03053</name>
</gene>
<accession>C7GRQ3</accession>
<dbReference type="EMBL" id="ACFL01000153">
    <property type="protein sequence ID" value="EEU06510.1"/>
    <property type="molecule type" value="Genomic_DNA"/>
</dbReference>
<dbReference type="SMR" id="C7GRQ3"/>
<dbReference type="Proteomes" id="UP000008073">
    <property type="component" value="Unassembled WGS sequence"/>
</dbReference>
<dbReference type="GO" id="GO:0042995">
    <property type="term" value="C:cell projection"/>
    <property type="evidence" value="ECO:0007669"/>
    <property type="project" value="UniProtKB-SubCell"/>
</dbReference>
<dbReference type="GO" id="GO:0005737">
    <property type="term" value="C:cytoplasm"/>
    <property type="evidence" value="ECO:0007669"/>
    <property type="project" value="UniProtKB-SubCell"/>
</dbReference>
<dbReference type="CDD" id="cd21457">
    <property type="entry name" value="DLC-like_TDA2"/>
    <property type="match status" value="1"/>
</dbReference>
<dbReference type="Gene3D" id="3.30.1140.40">
    <property type="entry name" value="Tctex-1"/>
    <property type="match status" value="1"/>
</dbReference>
<dbReference type="InterPro" id="IPR038586">
    <property type="entry name" value="Tctex-1-like_sf"/>
</dbReference>
<comment type="subcellular location">
    <subcellularLocation>
        <location evidence="1">Cytoplasm</location>
    </subcellularLocation>
    <subcellularLocation>
        <location evidence="1">Cell projection</location>
    </subcellularLocation>
    <text evidence="1">Concentrates at cytoplasmic punctate structures and localizes at the mating projection tip.</text>
</comment>
<comment type="similarity">
    <text evidence="2">Belongs to the TDA2 family.</text>
</comment>
<sequence>MSMQIEIKDGRSDNSPLPERKLVTLIQESYDSLKDDNEINLSTESTSNLLIKLVLEKLEKHSSLYKYIASVTTLNIEGLNEENANFSLKNDIGASWESKKDGIFNYKLEDKNNNECYLITILWLHK</sequence>
<protein>
    <recommendedName>
        <fullName>Topoisomerase I damage affected protein 2</fullName>
    </recommendedName>
</protein>
<feature type="initiator methionine" description="Removed" evidence="1">
    <location>
        <position position="1"/>
    </location>
</feature>
<feature type="chain" id="PRO_0000410735" description="Topoisomerase I damage affected protein 2">
    <location>
        <begin position="2"/>
        <end position="126"/>
    </location>
</feature>
<feature type="modified residue" description="N-acetylserine" evidence="1">
    <location>
        <position position="2"/>
    </location>
</feature>